<keyword id="KW-0131">Cell cycle</keyword>
<keyword id="KW-0132">Cell division</keyword>
<keyword id="KW-0997">Cell inner membrane</keyword>
<keyword id="KW-1003">Cell membrane</keyword>
<keyword id="KW-0472">Membrane</keyword>
<keyword id="KW-1185">Reference proteome</keyword>
<keyword id="KW-0812">Transmembrane</keyword>
<keyword id="KW-1133">Transmembrane helix</keyword>
<accession>P58492</accession>
<accession>Q0WCS4</accession>
<proteinExistence type="inferred from homology"/>
<protein>
    <recommendedName>
        <fullName evidence="1">Cell division protein ZipA</fullName>
    </recommendedName>
</protein>
<gene>
    <name evidence="1" type="primary">zipA</name>
    <name type="ordered locus">YPO2990</name>
    <name type="ordered locus">y1491</name>
    <name type="ordered locus">YP_2615</name>
</gene>
<dbReference type="EMBL" id="AL590842">
    <property type="protein sequence ID" value="CAL21594.1"/>
    <property type="molecule type" value="Genomic_DNA"/>
</dbReference>
<dbReference type="EMBL" id="AE009952">
    <property type="protein sequence ID" value="AAM85062.1"/>
    <property type="status" value="ALT_INIT"/>
    <property type="molecule type" value="Genomic_DNA"/>
</dbReference>
<dbReference type="EMBL" id="AE017042">
    <property type="protein sequence ID" value="AAS62808.1"/>
    <property type="status" value="ALT_INIT"/>
    <property type="molecule type" value="Genomic_DNA"/>
</dbReference>
<dbReference type="PIR" id="AG0363">
    <property type="entry name" value="AG0363"/>
</dbReference>
<dbReference type="RefSeq" id="WP_002227089.1">
    <property type="nucleotide sequence ID" value="NZ_WUCM01000111.1"/>
</dbReference>
<dbReference type="RefSeq" id="YP_002347914.1">
    <property type="nucleotide sequence ID" value="NC_003143.1"/>
</dbReference>
<dbReference type="SMR" id="P58492"/>
<dbReference type="IntAct" id="P58492">
    <property type="interactions" value="4"/>
</dbReference>
<dbReference type="STRING" id="214092.YPO2990"/>
<dbReference type="PaxDb" id="214092-YPO2990"/>
<dbReference type="DNASU" id="1146438"/>
<dbReference type="EnsemblBacteria" id="AAS62808">
    <property type="protein sequence ID" value="AAS62808"/>
    <property type="gene ID" value="YP_2615"/>
</dbReference>
<dbReference type="GeneID" id="57975708"/>
<dbReference type="KEGG" id="ype:YPO2990"/>
<dbReference type="KEGG" id="ypk:y1491"/>
<dbReference type="KEGG" id="ypm:YP_2615"/>
<dbReference type="PATRIC" id="fig|214092.21.peg.3444"/>
<dbReference type="eggNOG" id="COG3115">
    <property type="taxonomic scope" value="Bacteria"/>
</dbReference>
<dbReference type="HOGENOM" id="CLU_030174_1_0_6"/>
<dbReference type="OMA" id="FWSIRKQ"/>
<dbReference type="OrthoDB" id="7054914at2"/>
<dbReference type="Proteomes" id="UP000000815">
    <property type="component" value="Chromosome"/>
</dbReference>
<dbReference type="Proteomes" id="UP000001019">
    <property type="component" value="Chromosome"/>
</dbReference>
<dbReference type="Proteomes" id="UP000002490">
    <property type="component" value="Chromosome"/>
</dbReference>
<dbReference type="GO" id="GO:0032153">
    <property type="term" value="C:cell division site"/>
    <property type="evidence" value="ECO:0000318"/>
    <property type="project" value="GO_Central"/>
</dbReference>
<dbReference type="GO" id="GO:0005886">
    <property type="term" value="C:plasma membrane"/>
    <property type="evidence" value="ECO:0000318"/>
    <property type="project" value="GO_Central"/>
</dbReference>
<dbReference type="GO" id="GO:0000917">
    <property type="term" value="P:division septum assembly"/>
    <property type="evidence" value="ECO:0000318"/>
    <property type="project" value="GO_Central"/>
</dbReference>
<dbReference type="GO" id="GO:0043093">
    <property type="term" value="P:FtsZ-dependent cytokinesis"/>
    <property type="evidence" value="ECO:0007669"/>
    <property type="project" value="UniProtKB-UniRule"/>
</dbReference>
<dbReference type="CDD" id="cd00231">
    <property type="entry name" value="ZipA"/>
    <property type="match status" value="1"/>
</dbReference>
<dbReference type="FunFam" id="3.30.1400.10:FF:000001">
    <property type="entry name" value="Cell division protein ZipA"/>
    <property type="match status" value="1"/>
</dbReference>
<dbReference type="Gene3D" id="3.30.1400.10">
    <property type="entry name" value="ZipA, C-terminal FtsZ-binding domain"/>
    <property type="match status" value="1"/>
</dbReference>
<dbReference type="HAMAP" id="MF_00509">
    <property type="entry name" value="ZipA"/>
    <property type="match status" value="1"/>
</dbReference>
<dbReference type="InterPro" id="IPR011919">
    <property type="entry name" value="Cell_div_ZipA"/>
</dbReference>
<dbReference type="InterPro" id="IPR007449">
    <property type="entry name" value="ZipA_FtsZ-bd_C"/>
</dbReference>
<dbReference type="InterPro" id="IPR036765">
    <property type="entry name" value="ZipA_FtsZ-bd_C_sf"/>
</dbReference>
<dbReference type="NCBIfam" id="TIGR02205">
    <property type="entry name" value="septum_zipA"/>
    <property type="match status" value="1"/>
</dbReference>
<dbReference type="PANTHER" id="PTHR38685">
    <property type="entry name" value="CELL DIVISION PROTEIN ZIPA"/>
    <property type="match status" value="1"/>
</dbReference>
<dbReference type="PANTHER" id="PTHR38685:SF1">
    <property type="entry name" value="CELL DIVISION PROTEIN ZIPA"/>
    <property type="match status" value="1"/>
</dbReference>
<dbReference type="Pfam" id="PF04354">
    <property type="entry name" value="ZipA_C"/>
    <property type="match status" value="1"/>
</dbReference>
<dbReference type="SMART" id="SM00771">
    <property type="entry name" value="ZipA_C"/>
    <property type="match status" value="1"/>
</dbReference>
<dbReference type="SUPFAM" id="SSF64383">
    <property type="entry name" value="Cell-division protein ZipA, C-terminal domain"/>
    <property type="match status" value="1"/>
</dbReference>
<organism>
    <name type="scientific">Yersinia pestis</name>
    <dbReference type="NCBI Taxonomy" id="632"/>
    <lineage>
        <taxon>Bacteria</taxon>
        <taxon>Pseudomonadati</taxon>
        <taxon>Pseudomonadota</taxon>
        <taxon>Gammaproteobacteria</taxon>
        <taxon>Enterobacterales</taxon>
        <taxon>Yersiniaceae</taxon>
        <taxon>Yersinia</taxon>
    </lineage>
</organism>
<evidence type="ECO:0000255" key="1">
    <source>
        <dbReference type="HAMAP-Rule" id="MF_00509"/>
    </source>
</evidence>
<evidence type="ECO:0000256" key="2">
    <source>
        <dbReference type="SAM" id="MobiDB-lite"/>
    </source>
</evidence>
<evidence type="ECO:0000305" key="3"/>
<name>ZIPA_YERPE</name>
<reference key="1">
    <citation type="journal article" date="2001" name="Nature">
        <title>Genome sequence of Yersinia pestis, the causative agent of plague.</title>
        <authorList>
            <person name="Parkhill J."/>
            <person name="Wren B.W."/>
            <person name="Thomson N.R."/>
            <person name="Titball R.W."/>
            <person name="Holden M.T.G."/>
            <person name="Prentice M.B."/>
            <person name="Sebaihia M."/>
            <person name="James K.D."/>
            <person name="Churcher C.M."/>
            <person name="Mungall K.L."/>
            <person name="Baker S."/>
            <person name="Basham D."/>
            <person name="Bentley S.D."/>
            <person name="Brooks K."/>
            <person name="Cerdeno-Tarraga A.-M."/>
            <person name="Chillingworth T."/>
            <person name="Cronin A."/>
            <person name="Davies R.M."/>
            <person name="Davis P."/>
            <person name="Dougan G."/>
            <person name="Feltwell T."/>
            <person name="Hamlin N."/>
            <person name="Holroyd S."/>
            <person name="Jagels K."/>
            <person name="Karlyshev A.V."/>
            <person name="Leather S."/>
            <person name="Moule S."/>
            <person name="Oyston P.C.F."/>
            <person name="Quail M.A."/>
            <person name="Rutherford K.M."/>
            <person name="Simmonds M."/>
            <person name="Skelton J."/>
            <person name="Stevens K."/>
            <person name="Whitehead S."/>
            <person name="Barrell B.G."/>
        </authorList>
    </citation>
    <scope>NUCLEOTIDE SEQUENCE [LARGE SCALE GENOMIC DNA]</scope>
    <source>
        <strain>CO-92 / Biovar Orientalis</strain>
    </source>
</reference>
<reference key="2">
    <citation type="journal article" date="2002" name="J. Bacteriol.">
        <title>Genome sequence of Yersinia pestis KIM.</title>
        <authorList>
            <person name="Deng W."/>
            <person name="Burland V."/>
            <person name="Plunkett G. III"/>
            <person name="Boutin A."/>
            <person name="Mayhew G.F."/>
            <person name="Liss P."/>
            <person name="Perna N.T."/>
            <person name="Rose D.J."/>
            <person name="Mau B."/>
            <person name="Zhou S."/>
            <person name="Schwartz D.C."/>
            <person name="Fetherston J.D."/>
            <person name="Lindler L.E."/>
            <person name="Brubaker R.R."/>
            <person name="Plano G.V."/>
            <person name="Straley S.C."/>
            <person name="McDonough K.A."/>
            <person name="Nilles M.L."/>
            <person name="Matson J.S."/>
            <person name="Blattner F.R."/>
            <person name="Perry R.D."/>
        </authorList>
    </citation>
    <scope>NUCLEOTIDE SEQUENCE [LARGE SCALE GENOMIC DNA]</scope>
    <source>
        <strain>KIM10+ / Biovar Mediaevalis</strain>
    </source>
</reference>
<reference key="3">
    <citation type="journal article" date="2004" name="DNA Res.">
        <title>Complete genome sequence of Yersinia pestis strain 91001, an isolate avirulent to humans.</title>
        <authorList>
            <person name="Song Y."/>
            <person name="Tong Z."/>
            <person name="Wang J."/>
            <person name="Wang L."/>
            <person name="Guo Z."/>
            <person name="Han Y."/>
            <person name="Zhang J."/>
            <person name="Pei D."/>
            <person name="Zhou D."/>
            <person name="Qin H."/>
            <person name="Pang X."/>
            <person name="Han Y."/>
            <person name="Zhai J."/>
            <person name="Li M."/>
            <person name="Cui B."/>
            <person name="Qi Z."/>
            <person name="Jin L."/>
            <person name="Dai R."/>
            <person name="Chen F."/>
            <person name="Li S."/>
            <person name="Ye C."/>
            <person name="Du Z."/>
            <person name="Lin W."/>
            <person name="Wang J."/>
            <person name="Yu J."/>
            <person name="Yang H."/>
            <person name="Wang J."/>
            <person name="Huang P."/>
            <person name="Yang R."/>
        </authorList>
    </citation>
    <scope>NUCLEOTIDE SEQUENCE [LARGE SCALE GENOMIC DNA]</scope>
    <source>
        <strain>91001 / Biovar Mediaevalis</strain>
    </source>
</reference>
<feature type="chain" id="PRO_0000214546" description="Cell division protein ZipA">
    <location>
        <begin position="1"/>
        <end position="328"/>
    </location>
</feature>
<feature type="topological domain" description="Periplasmic" evidence="1">
    <location>
        <begin position="1"/>
        <end position="6"/>
    </location>
</feature>
<feature type="transmembrane region" description="Helical" evidence="1">
    <location>
        <begin position="7"/>
        <end position="27"/>
    </location>
</feature>
<feature type="topological domain" description="Cytoplasmic" evidence="1">
    <location>
        <begin position="28"/>
        <end position="328"/>
    </location>
</feature>
<feature type="region of interest" description="Disordered" evidence="2">
    <location>
        <begin position="61"/>
        <end position="183"/>
    </location>
</feature>
<feature type="compositionally biased region" description="Basic and acidic residues" evidence="2">
    <location>
        <begin position="61"/>
        <end position="72"/>
    </location>
</feature>
<feature type="compositionally biased region" description="Polar residues" evidence="2">
    <location>
        <begin position="95"/>
        <end position="104"/>
    </location>
</feature>
<feature type="compositionally biased region" description="Polar residues" evidence="2">
    <location>
        <begin position="164"/>
        <end position="174"/>
    </location>
</feature>
<sequence>MMQDLRLILIVVGAIAIIALLLHGLWTSRKERSSLFRDRPVKRTKQERVETPIESLDEGVGEVRVRTSHPQEKPSFNHLDDDDDEVPVIQHAETKSAQVKTASRQAPFASVQTDYDDPLLGGLSAEQPPHDLSRDPLLGKADESYSQPQHAEPPHVEKPAHQVAPQQHVESQQEPVAPAPEAKPQKLKETVLVLHVAAHHGGVIGGEVLLQSVLQSGFQFGEMGIFHRHLSPAGSGPVLFSLANMVKPGSFDPDTMSDFSTPGVSMFMMVPSYGDANQNFKLMLQSAQRIADDVGGVVLDDERRMMTPQKLESYKARIREVLDANTIA</sequence>
<comment type="function">
    <text evidence="1">Essential cell division protein that stabilizes the FtsZ protofilaments by cross-linking them and that serves as a cytoplasmic membrane anchor for the Z ring. Also required for the recruitment to the septal ring of downstream cell division proteins.</text>
</comment>
<comment type="subunit">
    <text evidence="1">Interacts with FtsZ via their C-terminal domains.</text>
</comment>
<comment type="subcellular location">
    <subcellularLocation>
        <location evidence="1">Cell inner membrane</location>
        <topology evidence="1">Single-pass type I membrane protein</topology>
    </subcellularLocation>
    <text evidence="1">Localizes to the Z ring in an FtsZ-dependent manner.</text>
</comment>
<comment type="similarity">
    <text evidence="1">Belongs to the ZipA family.</text>
</comment>
<comment type="sequence caution" evidence="3">
    <conflict type="erroneous initiation">
        <sequence resource="EMBL-CDS" id="AAM85062"/>
    </conflict>
</comment>
<comment type="sequence caution" evidence="3">
    <conflict type="erroneous initiation">
        <sequence resource="EMBL-CDS" id="AAS62808"/>
    </conflict>
</comment>